<gene>
    <name type="ORF">v1g194562</name>
</gene>
<sequence length="203" mass="23147">MASIRLLPSCIVLMFLARSSLCYFITIDAHGEECFHDKVTSGTKMGLIFEVAEGGFLDIDVKIIGPDQKVIYSGERETSGKYTFAAHMDGTYNYCFSNKMSTMTPKVLKFSMDIGEAPKDTSKEDNAGHDKLSEMVSQLSEAMTGVKHEQEYMEVRERIHRSINDNTNSRVVWWSFFESLVLVAMTLGQVYYLKRFFEVRRVV</sequence>
<evidence type="ECO:0000250" key="1"/>
<evidence type="ECO:0000255" key="2"/>
<evidence type="ECO:0000255" key="3">
    <source>
        <dbReference type="PROSITE-ProRule" id="PRU00096"/>
    </source>
</evidence>
<evidence type="ECO:0000305" key="4"/>
<comment type="function">
    <text evidence="1">Could have a role in the budding of coatomer-coated and other species of coated vesicles.</text>
</comment>
<comment type="subcellular location">
    <subcellularLocation>
        <location evidence="1">Cytoplasmic vesicle membrane</location>
        <topology evidence="1">Single-pass type I membrane protein</topology>
    </subcellularLocation>
</comment>
<comment type="similarity">
    <text evidence="4">Belongs to the EMP24/GP25L family.</text>
</comment>
<organism>
    <name type="scientific">Nematostella vectensis</name>
    <name type="common">Starlet sea anemone</name>
    <dbReference type="NCBI Taxonomy" id="45351"/>
    <lineage>
        <taxon>Eukaryota</taxon>
        <taxon>Metazoa</taxon>
        <taxon>Cnidaria</taxon>
        <taxon>Anthozoa</taxon>
        <taxon>Hexacorallia</taxon>
        <taxon>Actiniaria</taxon>
        <taxon>Edwardsiidae</taxon>
        <taxon>Nematostella</taxon>
    </lineage>
</organism>
<dbReference type="EMBL" id="DS469890">
    <property type="protein sequence ID" value="EDO31547.1"/>
    <property type="molecule type" value="Genomic_DNA"/>
</dbReference>
<dbReference type="SMR" id="A7SXK3"/>
<dbReference type="STRING" id="45351.A7SXK3"/>
<dbReference type="EnsemblMetazoa" id="EDO31547">
    <property type="protein sequence ID" value="EDO31547"/>
    <property type="gene ID" value="NEMVEDRAFT_v1g194562"/>
</dbReference>
<dbReference type="KEGG" id="nve:5502470"/>
<dbReference type="eggNOG" id="KOG1692">
    <property type="taxonomic scope" value="Eukaryota"/>
</dbReference>
<dbReference type="HOGENOM" id="CLU_066963_4_1_1"/>
<dbReference type="InParanoid" id="A7SXK3"/>
<dbReference type="OMA" id="MQVRDRN"/>
<dbReference type="OrthoDB" id="1929172at2759"/>
<dbReference type="PhylomeDB" id="A7SXK3"/>
<dbReference type="Proteomes" id="UP000001593">
    <property type="component" value="Unassembled WGS sequence"/>
</dbReference>
<dbReference type="GO" id="GO:0030134">
    <property type="term" value="C:COPII-coated ER to Golgi transport vesicle"/>
    <property type="evidence" value="ECO:0000318"/>
    <property type="project" value="GO_Central"/>
</dbReference>
<dbReference type="GO" id="GO:0030659">
    <property type="term" value="C:cytoplasmic vesicle membrane"/>
    <property type="evidence" value="ECO:0007669"/>
    <property type="project" value="UniProtKB-SubCell"/>
</dbReference>
<dbReference type="GO" id="GO:0005783">
    <property type="term" value="C:endoplasmic reticulum"/>
    <property type="evidence" value="ECO:0000318"/>
    <property type="project" value="GO_Central"/>
</dbReference>
<dbReference type="GO" id="GO:0005793">
    <property type="term" value="C:endoplasmic reticulum-Golgi intermediate compartment"/>
    <property type="evidence" value="ECO:0000318"/>
    <property type="project" value="GO_Central"/>
</dbReference>
<dbReference type="GO" id="GO:0005794">
    <property type="term" value="C:Golgi apparatus"/>
    <property type="evidence" value="ECO:0000318"/>
    <property type="project" value="GO_Central"/>
</dbReference>
<dbReference type="GO" id="GO:0006888">
    <property type="term" value="P:endoplasmic reticulum to Golgi vesicle-mediated transport"/>
    <property type="evidence" value="ECO:0000318"/>
    <property type="project" value="GO_Central"/>
</dbReference>
<dbReference type="GO" id="GO:0007030">
    <property type="term" value="P:Golgi organization"/>
    <property type="evidence" value="ECO:0000318"/>
    <property type="project" value="GO_Central"/>
</dbReference>
<dbReference type="GO" id="GO:0006886">
    <property type="term" value="P:intracellular protein transport"/>
    <property type="evidence" value="ECO:0000318"/>
    <property type="project" value="GO_Central"/>
</dbReference>
<dbReference type="InterPro" id="IPR015720">
    <property type="entry name" value="Emp24-like"/>
</dbReference>
<dbReference type="InterPro" id="IPR009038">
    <property type="entry name" value="GOLD_dom"/>
</dbReference>
<dbReference type="InterPro" id="IPR036598">
    <property type="entry name" value="GOLD_dom_sf"/>
</dbReference>
<dbReference type="PANTHER" id="PTHR22811">
    <property type="entry name" value="TRANSMEMBRANE EMP24 DOMAIN-CONTAINING PROTEIN"/>
    <property type="match status" value="1"/>
</dbReference>
<dbReference type="Pfam" id="PF01105">
    <property type="entry name" value="EMP24_GP25L"/>
    <property type="match status" value="1"/>
</dbReference>
<dbReference type="SMART" id="SM01190">
    <property type="entry name" value="EMP24_GP25L"/>
    <property type="match status" value="1"/>
</dbReference>
<dbReference type="SUPFAM" id="SSF101576">
    <property type="entry name" value="Supernatant protein factor (SPF), C-terminal domain"/>
    <property type="match status" value="1"/>
</dbReference>
<dbReference type="PROSITE" id="PS50866">
    <property type="entry name" value="GOLD"/>
    <property type="match status" value="1"/>
</dbReference>
<proteinExistence type="inferred from homology"/>
<keyword id="KW-0968">Cytoplasmic vesicle</keyword>
<keyword id="KW-0472">Membrane</keyword>
<keyword id="KW-0653">Protein transport</keyword>
<keyword id="KW-1185">Reference proteome</keyword>
<keyword id="KW-0732">Signal</keyword>
<keyword id="KW-0812">Transmembrane</keyword>
<keyword id="KW-1133">Transmembrane helix</keyword>
<keyword id="KW-0813">Transport</keyword>
<feature type="signal peptide" evidence="2">
    <location>
        <begin position="1"/>
        <end position="22"/>
    </location>
</feature>
<feature type="chain" id="PRO_0000342024" description="Transmembrane emp24 domain-containing protein">
    <location>
        <begin position="23"/>
        <end position="203"/>
    </location>
</feature>
<feature type="topological domain" description="Lumenal" evidence="2">
    <location>
        <begin position="23"/>
        <end position="170"/>
    </location>
</feature>
<feature type="transmembrane region" description="Helical" evidence="2">
    <location>
        <begin position="171"/>
        <end position="191"/>
    </location>
</feature>
<feature type="topological domain" description="Cytoplasmic" evidence="2">
    <location>
        <begin position="192"/>
        <end position="203"/>
    </location>
</feature>
<feature type="domain" description="GOLD" evidence="3">
    <location>
        <begin position="32"/>
        <end position="114"/>
    </location>
</feature>
<accession>A7SXK3</accession>
<reference key="1">
    <citation type="journal article" date="2007" name="Science">
        <title>Sea anemone genome reveals ancestral eumetazoan gene repertoire and genomic organization.</title>
        <authorList>
            <person name="Putnam N.H."/>
            <person name="Srivastava M."/>
            <person name="Hellsten U."/>
            <person name="Dirks B."/>
            <person name="Chapman J."/>
            <person name="Salamov A."/>
            <person name="Terry A."/>
            <person name="Shapiro H."/>
            <person name="Lindquist E."/>
            <person name="Kapitonov V.V."/>
            <person name="Jurka J."/>
            <person name="Genikhovich G."/>
            <person name="Grigoriev I.V."/>
            <person name="Lucas S.M."/>
            <person name="Steele R.E."/>
            <person name="Finnerty J.R."/>
            <person name="Technau U."/>
            <person name="Martindale M.Q."/>
            <person name="Rokhsar D.S."/>
        </authorList>
    </citation>
    <scope>NUCLEOTIDE SEQUENCE [LARGE SCALE GENOMIC DNA]</scope>
    <source>
        <strain>CH2 X CH6</strain>
    </source>
</reference>
<name>TMED_NEMVE</name>
<protein>
    <recommendedName>
        <fullName>Transmembrane emp24 domain-containing protein</fullName>
    </recommendedName>
</protein>